<gene>
    <name type="primary">fbxA</name>
    <name type="synonym">chtA</name>
    <name type="ORF">DDB_G0276887</name>
</gene>
<feature type="chain" id="PRO_0000327394" description="F-box/WD repeat-containing protein A">
    <location>
        <begin position="1"/>
        <end position="1247"/>
    </location>
</feature>
<feature type="domain" description="START" evidence="2">
    <location>
        <begin position="1"/>
        <end position="214"/>
    </location>
</feature>
<feature type="domain" description="F-box" evidence="1">
    <location>
        <begin position="631"/>
        <end position="677"/>
    </location>
</feature>
<feature type="repeat" description="WD 1">
    <location>
        <begin position="895"/>
        <end position="934"/>
    </location>
</feature>
<feature type="repeat" description="WD 2">
    <location>
        <begin position="945"/>
        <end position="984"/>
    </location>
</feature>
<feature type="repeat" description="WD 3">
    <location>
        <begin position="988"/>
        <end position="1025"/>
    </location>
</feature>
<feature type="repeat" description="WD 4">
    <location>
        <begin position="1029"/>
        <end position="1073"/>
    </location>
</feature>
<feature type="repeat" description="WD 5">
    <location>
        <begin position="1076"/>
        <end position="1114"/>
    </location>
</feature>
<feature type="repeat" description="WD 6">
    <location>
        <begin position="1119"/>
        <end position="1158"/>
    </location>
</feature>
<feature type="repeat" description="WD 7">
    <location>
        <begin position="1218"/>
        <end position="1247"/>
    </location>
</feature>
<feature type="region of interest" description="Disordered" evidence="3">
    <location>
        <begin position="484"/>
        <end position="514"/>
    </location>
</feature>
<feature type="region of interest" description="Disordered" evidence="3">
    <location>
        <begin position="552"/>
        <end position="576"/>
    </location>
</feature>
<feature type="region of interest" description="Disordered" evidence="3">
    <location>
        <begin position="697"/>
        <end position="744"/>
    </location>
</feature>
<feature type="region of interest" description="Disordered" evidence="3">
    <location>
        <begin position="833"/>
        <end position="856"/>
    </location>
</feature>
<feature type="compositionally biased region" description="Low complexity" evidence="3">
    <location>
        <begin position="552"/>
        <end position="566"/>
    </location>
</feature>
<feature type="compositionally biased region" description="Low complexity" evidence="3">
    <location>
        <begin position="707"/>
        <end position="719"/>
    </location>
</feature>
<feature type="compositionally biased region" description="Low complexity" evidence="3">
    <location>
        <begin position="726"/>
        <end position="744"/>
    </location>
</feature>
<feature type="compositionally biased region" description="Polar residues" evidence="3">
    <location>
        <begin position="833"/>
        <end position="846"/>
    </location>
</feature>
<feature type="sequence conflict" description="In Ref. 1; AAD40673." evidence="9" ref="1">
    <original>K</original>
    <variation>M</variation>
    <location>
        <position position="228"/>
    </location>
</feature>
<sequence length="1247" mass="142388">MQYVNGNDISSQSIHEVLELAFSTKIPWTKLEYESSEKHIIHSYSSHERGIYLSKGVAEFNISPENMYELLLDISSRSKWDFHCREAHIIEEYDHLNHIIHLNFTNPLISNLDMNLYRSCKYDPQERLFVIAMRSIELEDGDVDQFECLPNGWVIQGLRGQKDKCKMTFVQQCDLRDIELQRIPGYKSFNSKERLEDFQFLTLFPATVSGRLAKIFESIELYISNNVKDIETKDIRISIMEKAEKEVNEMFGTTNPDYGWKIYLKKLDMEILIKKTTSGYYMIGKGSFSSRYSPELLADVLYQKNPFEWDTFYDKTKLVESINSSIREVEVHYRMWRNTITMRLLQSVKKGPGNFSSVHWRSICSPNYQVADGIEVHYLPTALLNYGLGDGSFTSFLAAIEVKGYPTPWEEEMVTKMFAARIISNQNSIINHVNKLTGGSEMIRELPVIPSVQHHCGDVGSHIGTPQVYNAMVENFADILLDEGNKDGNVVSSKNKRKRNKNNENKNNNNDNIIDEEIEQEEENIEKDQQQTQQQQTQKQQQQQQQQQKTQQQPQQQQQQPQEQQQNHSQLKKEIKPTRPSIRFTYLLSNSSSGQRPIAWYESKKQPFLFLVSDSSERKGKIQRKTYYFSNSGFDNLPEEVVQIIFSNLSAINIVNLSLVCKRFKMATDSPILWKNLYKSNPLFHKKTPKRKQIIHSNLSNDENKVNSNSGDSADGSSSQEEEEQQQQNQQQNQQQNQQQQQQQTFDLSNINLNDPISLLMVFTNGIIPQNLSPTEIINVGGIVSQIDLNDLSNVETLIQQLPHQVLSLIQMNTLDAKIQHLSMISGMPATIGQESPINKNSSDNPKPNAYNKRDNNSYIPDEEFINWKSHYTEKHKQSKRWVNMEPIRITPLKGHNRAIKAVKSEGNSAITVSTEKKIKFWNLNTGQCIGDYEGESGVLSVEYDHTQKSSCIWPLSDYTKVHIGHKNGTVTMVDFIEQPIEVIHTSRPTNLADGFDFTFPGKYLIWEHTIIHYWDVETSTLLWNELNAHTKKITQSKIVAQHELSNKGIVFTTSSDKSAKVWDLTNGTCINTLVGHSYAVNCIEPIGDYMALTGSTDKTLKLWDLRQASTFISSYSTKHTGPIRCISYQEKNGIVLSGSDDGSIIAFNLDNWNLSNISVVKKPIFNNVIGNIGTTTTTTTTTTTTTTTTTSTTNNTNVPEIPKINLGTFKDSKRLHNHESAVTCIESDEAGFISGSQNGLVLRWDF</sequence>
<organism>
    <name type="scientific">Dictyostelium discoideum</name>
    <name type="common">Social amoeba</name>
    <dbReference type="NCBI Taxonomy" id="44689"/>
    <lineage>
        <taxon>Eukaryota</taxon>
        <taxon>Amoebozoa</taxon>
        <taxon>Evosea</taxon>
        <taxon>Eumycetozoa</taxon>
        <taxon>Dictyostelia</taxon>
        <taxon>Dictyosteliales</taxon>
        <taxon>Dictyosteliaceae</taxon>
        <taxon>Dictyostelium</taxon>
    </lineage>
</organism>
<reference key="1">
    <citation type="journal article" date="2000" name="Dev. Biol.">
        <title>An F-Box/WD40 repeat-containing protein important for Dictyostelium cell-type proportioning, slug behaviour, and culmination.</title>
        <authorList>
            <person name="Nelson M.K."/>
            <person name="Clark A."/>
            <person name="Abe T."/>
            <person name="Nomura A."/>
            <person name="Yadava N."/>
            <person name="Funair C.J."/>
            <person name="Jermyn K.A."/>
            <person name="Mohanty S."/>
            <person name="Firtel R.A."/>
            <person name="Williams J.G."/>
        </authorList>
    </citation>
    <scope>NUCLEOTIDE SEQUENCE [GENOMIC DNA]</scope>
    <scope>FUNCTION</scope>
    <scope>DEVELOPMENTAL STAGE</scope>
</reference>
<reference key="2">
    <citation type="journal article" date="2000" name="Proc. Natl. Acad. Sci. U.S.A.">
        <title>Dictyostelium amoebae lacking an F-box protein form spores rather than stalk in chimeras with wild type.</title>
        <authorList>
            <person name="Ennis H.L."/>
            <person name="Dao D.N."/>
            <person name="Pukatzki S.U."/>
            <person name="Kessin R.H."/>
        </authorList>
    </citation>
    <scope>NUCLEOTIDE SEQUENCE [GENOMIC DNA]</scope>
    <scope>NUCLEOTIDE SEQUENCE [MRNA] OF 1-720</scope>
    <scope>FUNCTION</scope>
    <scope>DEVELOPMENTAL STAGE</scope>
    <source>
        <strain>AX3-1</strain>
    </source>
</reference>
<reference key="3">
    <citation type="submission" date="2002-04" db="EMBL/GenBank/DDBJ databases">
        <authorList>
            <person name="Franke J."/>
        </authorList>
    </citation>
    <scope>SEQUENCE REVISION TO 1025</scope>
</reference>
<reference key="4">
    <citation type="journal article" date="2002" name="Nature">
        <title>Sequence and analysis of chromosome 2 of Dictyostelium discoideum.</title>
        <authorList>
            <person name="Gloeckner G."/>
            <person name="Eichinger L."/>
            <person name="Szafranski K."/>
            <person name="Pachebat J.A."/>
            <person name="Bankier A.T."/>
            <person name="Dear P.H."/>
            <person name="Lehmann R."/>
            <person name="Baumgart C."/>
            <person name="Parra G."/>
            <person name="Abril J.F."/>
            <person name="Guigo R."/>
            <person name="Kumpf K."/>
            <person name="Tunggal B."/>
            <person name="Cox E.C."/>
            <person name="Quail M.A."/>
            <person name="Platzer M."/>
            <person name="Rosenthal A."/>
            <person name="Noegel A.A."/>
        </authorList>
    </citation>
    <scope>NUCLEOTIDE SEQUENCE [LARGE SCALE GENOMIC DNA]</scope>
    <source>
        <strain>AX4</strain>
    </source>
</reference>
<reference key="5">
    <citation type="journal article" date="2005" name="Nature">
        <title>The genome of the social amoeba Dictyostelium discoideum.</title>
        <authorList>
            <person name="Eichinger L."/>
            <person name="Pachebat J.A."/>
            <person name="Gloeckner G."/>
            <person name="Rajandream M.A."/>
            <person name="Sucgang R."/>
            <person name="Berriman M."/>
            <person name="Song J."/>
            <person name="Olsen R."/>
            <person name="Szafranski K."/>
            <person name="Xu Q."/>
            <person name="Tunggal B."/>
            <person name="Kummerfeld S."/>
            <person name="Madera M."/>
            <person name="Konfortov B.A."/>
            <person name="Rivero F."/>
            <person name="Bankier A.T."/>
            <person name="Lehmann R."/>
            <person name="Hamlin N."/>
            <person name="Davies R."/>
            <person name="Gaudet P."/>
            <person name="Fey P."/>
            <person name="Pilcher K."/>
            <person name="Chen G."/>
            <person name="Saunders D."/>
            <person name="Sodergren E.J."/>
            <person name="Davis P."/>
            <person name="Kerhornou A."/>
            <person name="Nie X."/>
            <person name="Hall N."/>
            <person name="Anjard C."/>
            <person name="Hemphill L."/>
            <person name="Bason N."/>
            <person name="Farbrother P."/>
            <person name="Desany B."/>
            <person name="Just E."/>
            <person name="Morio T."/>
            <person name="Rost R."/>
            <person name="Churcher C.M."/>
            <person name="Cooper J."/>
            <person name="Haydock S."/>
            <person name="van Driessche N."/>
            <person name="Cronin A."/>
            <person name="Goodhead I."/>
            <person name="Muzny D.M."/>
            <person name="Mourier T."/>
            <person name="Pain A."/>
            <person name="Lu M."/>
            <person name="Harper D."/>
            <person name="Lindsay R."/>
            <person name="Hauser H."/>
            <person name="James K.D."/>
            <person name="Quiles M."/>
            <person name="Madan Babu M."/>
            <person name="Saito T."/>
            <person name="Buchrieser C."/>
            <person name="Wardroper A."/>
            <person name="Felder M."/>
            <person name="Thangavelu M."/>
            <person name="Johnson D."/>
            <person name="Knights A."/>
            <person name="Loulseged H."/>
            <person name="Mungall K.L."/>
            <person name="Oliver K."/>
            <person name="Price C."/>
            <person name="Quail M.A."/>
            <person name="Urushihara H."/>
            <person name="Hernandez J."/>
            <person name="Rabbinowitsch E."/>
            <person name="Steffen D."/>
            <person name="Sanders M."/>
            <person name="Ma J."/>
            <person name="Kohara Y."/>
            <person name="Sharp S."/>
            <person name="Simmonds M.N."/>
            <person name="Spiegler S."/>
            <person name="Tivey A."/>
            <person name="Sugano S."/>
            <person name="White B."/>
            <person name="Walker D."/>
            <person name="Woodward J.R."/>
            <person name="Winckler T."/>
            <person name="Tanaka Y."/>
            <person name="Shaulsky G."/>
            <person name="Schleicher M."/>
            <person name="Weinstock G.M."/>
            <person name="Rosenthal A."/>
            <person name="Cox E.C."/>
            <person name="Chisholm R.L."/>
            <person name="Gibbs R.A."/>
            <person name="Loomis W.F."/>
            <person name="Platzer M."/>
            <person name="Kay R.R."/>
            <person name="Williams J.G."/>
            <person name="Dear P.H."/>
            <person name="Noegel A.A."/>
            <person name="Barrell B.G."/>
            <person name="Kuspa A."/>
        </authorList>
    </citation>
    <scope>NUCLEOTIDE SEQUENCE [LARGE SCALE GENOMIC DNA]</scope>
    <source>
        <strain>AX4</strain>
    </source>
</reference>
<reference key="6">
    <citation type="journal article" date="2001" name="Genes Dev.">
        <title>Regulated protein degradation controls PKA function and cell-type differentiation in Dictyostelium.</title>
        <authorList>
            <person name="Mohanty S."/>
            <person name="Lee S."/>
            <person name="Yadava N."/>
            <person name="Dealy M.J."/>
            <person name="Johnson R.S."/>
            <person name="Firtel R.A."/>
        </authorList>
    </citation>
    <scope>FUNCTION</scope>
    <scope>INTERACTION WITH CULA AND REGA</scope>
</reference>
<reference key="7">
    <citation type="journal article" date="2003" name="Eukaryot. Cell">
        <title>Genetic interactions of the E3 ubiquitin ligase component FbxA with cyclic AMP metabolism and a histidine kinase signaling pathway during Dictyostelium discoideum development.</title>
        <authorList>
            <person name="Tekinay T."/>
            <person name="Ennis H.L."/>
            <person name="Wu M.Y."/>
            <person name="Nelson M."/>
            <person name="Kessin R.H."/>
            <person name="Ratner D.I."/>
        </authorList>
    </citation>
    <scope>FUNCTION</scope>
    <scope>DEVELOPMENTAL STAGE</scope>
    <scope>DISRUPTION PHENOTYPE</scope>
</reference>
<reference key="8">
    <citation type="journal article" date="2007" name="Proc. Natl. Acad. Sci. U.S.A.">
        <title>High relatedness maintains multicellular cooperation in a social amoeba by controlling cheater mutants.</title>
        <authorList>
            <person name="Gilbert O.M."/>
            <person name="Foster K.R."/>
            <person name="Mehdiabadi N.J."/>
            <person name="Strassmann J.E."/>
            <person name="Queller D.C."/>
        </authorList>
    </citation>
    <scope>FUNCTION</scope>
</reference>
<comment type="function">
    <text evidence="4 5 6 7 8">Substrate recognition component of a SCF (SKP1-CUL1-F-box protein) E3 ubiquitin-protein ligase complex which mediates the ubiquitination and subsequent proteasomal degradation of target proteins. May target the cAMP phosphodiesterase regA for degradation leading to an increase in cAMP and PKA activity. Promotes development of prestalk cells as opposed to prespores within the developing fruiting body. Required for culmination and fruiting body development.</text>
</comment>
<comment type="subunit">
    <text evidence="6">Component of an SCF complex including at least culA. Formation of this complex appears to require activity of the MAP kinase erk2. Interacts with regA.</text>
</comment>
<comment type="developmental stage">
    <text evidence="4 5 7">Not expressed during vegetative growth. Expressed from around 4 hours following the induction of starvation. Expression peaks around 14 hours (first finger/slug stage), and drops around 18 hours (Mexican hat stage). Expressed at high levels in prestalk cells. Also expressed in spores that have risen to the top of the fruiting body and undergone encapsulation.</text>
</comment>
<comment type="disruption phenotype">
    <text evidence="7">Cells preferentially form spores within chimeric cell populations and are more likely to survive adverse conditions than their wild type counterparts, which accumulate preferentially within the stalk. Such mutants have been termed 'cheaters'. Over time, mutant cheaters may be expected to dominate mixed populations, as they ensure their own survival at the expense of their altruistic wild type counterparts. The spread of cheater mutants may be limited by the high degree of relatedness within naturally occurring populations of Dictyostelium discoideum. Altruistic behavior may be preserved from the damaging effects of mutant cheaters by the formation of clonal fruiting bodies, in which all cells exhibit cooperative behavior.</text>
</comment>
<proteinExistence type="evidence at protein level"/>
<accession>Q9Y0T2</accession>
<accession>Q550Q0</accession>
<accession>Q9U9T1</accession>
<accession>Q9U9U5</accession>
<keyword id="KW-0217">Developmental protein</keyword>
<keyword id="KW-0221">Differentiation</keyword>
<keyword id="KW-0293">Fruiting body</keyword>
<keyword id="KW-1185">Reference proteome</keyword>
<keyword id="KW-0677">Repeat</keyword>
<keyword id="KW-0749">Sporulation</keyword>
<keyword id="KW-0833">Ubl conjugation pathway</keyword>
<keyword id="KW-0853">WD repeat</keyword>
<dbReference type="EMBL" id="AF151733">
    <property type="protein sequence ID" value="AAD40673.1"/>
    <property type="molecule type" value="Genomic_DNA"/>
</dbReference>
<dbReference type="EMBL" id="AF151111">
    <property type="protein sequence ID" value="AAD37799.2"/>
    <property type="molecule type" value="Genomic_DNA"/>
</dbReference>
<dbReference type="EMBL" id="AF151112">
    <property type="protein sequence ID" value="AAD37800.1"/>
    <property type="molecule type" value="mRNA"/>
</dbReference>
<dbReference type="EMBL" id="AAFI02000019">
    <property type="protein sequence ID" value="EAL68945.1"/>
    <property type="molecule type" value="Genomic_DNA"/>
</dbReference>
<dbReference type="RefSeq" id="XP_642882.1">
    <property type="nucleotide sequence ID" value="XM_637790.1"/>
</dbReference>
<dbReference type="SMR" id="Q9Y0T2"/>
<dbReference type="FunCoup" id="Q9Y0T2">
    <property type="interactions" value="372"/>
</dbReference>
<dbReference type="STRING" id="44689.Q9Y0T2"/>
<dbReference type="PaxDb" id="44689-DDB0185042"/>
<dbReference type="EnsemblProtists" id="EAL68945">
    <property type="protein sequence ID" value="EAL68945"/>
    <property type="gene ID" value="DDB_G0276887"/>
</dbReference>
<dbReference type="GeneID" id="8620748"/>
<dbReference type="KEGG" id="ddi:DDB_G0276887"/>
<dbReference type="dictyBase" id="DDB_G0276887">
    <property type="gene designation" value="fbxA"/>
</dbReference>
<dbReference type="VEuPathDB" id="AmoebaDB:DDB_G0276887"/>
<dbReference type="eggNOG" id="KOG0274">
    <property type="taxonomic scope" value="Eukaryota"/>
</dbReference>
<dbReference type="HOGENOM" id="CLU_266138_0_0_1"/>
<dbReference type="InParanoid" id="Q9Y0T2"/>
<dbReference type="OMA" id="NGWVIQG"/>
<dbReference type="PRO" id="PR:Q9Y0T2"/>
<dbReference type="Proteomes" id="UP000002195">
    <property type="component" value="Chromosome 2"/>
</dbReference>
<dbReference type="GO" id="GO:0019005">
    <property type="term" value="C:SCF ubiquitin ligase complex"/>
    <property type="evidence" value="ECO:0000314"/>
    <property type="project" value="dictyBase"/>
</dbReference>
<dbReference type="GO" id="GO:0008289">
    <property type="term" value="F:lipid binding"/>
    <property type="evidence" value="ECO:0007669"/>
    <property type="project" value="InterPro"/>
</dbReference>
<dbReference type="GO" id="GO:0004842">
    <property type="term" value="F:ubiquitin-protein transferase activity"/>
    <property type="evidence" value="ECO:0000250"/>
    <property type="project" value="dictyBase"/>
</dbReference>
<dbReference type="GO" id="GO:0030154">
    <property type="term" value="P:cell differentiation"/>
    <property type="evidence" value="ECO:0007669"/>
    <property type="project" value="UniProtKB-KW"/>
</dbReference>
<dbReference type="GO" id="GO:0099139">
    <property type="term" value="P:cheating during chimeric sorocarp development"/>
    <property type="evidence" value="ECO:0000314"/>
    <property type="project" value="dictyBase"/>
</dbReference>
<dbReference type="GO" id="GO:0031154">
    <property type="term" value="P:culmination involved in sorocarp development"/>
    <property type="evidence" value="ECO:0000315"/>
    <property type="project" value="dictyBase"/>
</dbReference>
<dbReference type="GO" id="GO:0045595">
    <property type="term" value="P:regulation of cell differentiation"/>
    <property type="evidence" value="ECO:0000315"/>
    <property type="project" value="dictyBase"/>
</dbReference>
<dbReference type="GO" id="GO:0030435">
    <property type="term" value="P:sporulation resulting in formation of a cellular spore"/>
    <property type="evidence" value="ECO:0000315"/>
    <property type="project" value="dictyBase"/>
</dbReference>
<dbReference type="GO" id="GO:0006511">
    <property type="term" value="P:ubiquitin-dependent protein catabolic process"/>
    <property type="evidence" value="ECO:0000250"/>
    <property type="project" value="dictyBase"/>
</dbReference>
<dbReference type="CDD" id="cd00177">
    <property type="entry name" value="START"/>
    <property type="match status" value="1"/>
</dbReference>
<dbReference type="Gene3D" id="1.20.1280.50">
    <property type="match status" value="1"/>
</dbReference>
<dbReference type="Gene3D" id="3.30.530.20">
    <property type="match status" value="2"/>
</dbReference>
<dbReference type="Gene3D" id="2.130.10.10">
    <property type="entry name" value="YVTN repeat-like/Quinoprotein amine dehydrogenase"/>
    <property type="match status" value="2"/>
</dbReference>
<dbReference type="InterPro" id="IPR036047">
    <property type="entry name" value="F-box-like_dom_sf"/>
</dbReference>
<dbReference type="InterPro" id="IPR001810">
    <property type="entry name" value="F-box_dom"/>
</dbReference>
<dbReference type="InterPro" id="IPR051075">
    <property type="entry name" value="SCF_subunit_WD-repeat"/>
</dbReference>
<dbReference type="InterPro" id="IPR023393">
    <property type="entry name" value="START-like_dom_sf"/>
</dbReference>
<dbReference type="InterPro" id="IPR002913">
    <property type="entry name" value="START_lipid-bd_dom"/>
</dbReference>
<dbReference type="InterPro" id="IPR015943">
    <property type="entry name" value="WD40/YVTN_repeat-like_dom_sf"/>
</dbReference>
<dbReference type="InterPro" id="IPR019775">
    <property type="entry name" value="WD40_repeat_CS"/>
</dbReference>
<dbReference type="InterPro" id="IPR036322">
    <property type="entry name" value="WD40_repeat_dom_sf"/>
</dbReference>
<dbReference type="InterPro" id="IPR001680">
    <property type="entry name" value="WD40_rpt"/>
</dbReference>
<dbReference type="PANTHER" id="PTHR19872">
    <property type="entry name" value="UBIQUITIN LIGASE SPECIFICITY FACTOR/HREP PROTEIN"/>
    <property type="match status" value="1"/>
</dbReference>
<dbReference type="PANTHER" id="PTHR19872:SF9">
    <property type="entry name" value="UBIQUITIN-BINDING SDF UBIQUITIN LIGASE COMPLEX SUBUNIT"/>
    <property type="match status" value="1"/>
</dbReference>
<dbReference type="Pfam" id="PF12937">
    <property type="entry name" value="F-box-like"/>
    <property type="match status" value="1"/>
</dbReference>
<dbReference type="Pfam" id="PF01852">
    <property type="entry name" value="START"/>
    <property type="match status" value="1"/>
</dbReference>
<dbReference type="Pfam" id="PF00400">
    <property type="entry name" value="WD40"/>
    <property type="match status" value="2"/>
</dbReference>
<dbReference type="SMART" id="SM00256">
    <property type="entry name" value="FBOX"/>
    <property type="match status" value="1"/>
</dbReference>
<dbReference type="SMART" id="SM00320">
    <property type="entry name" value="WD40"/>
    <property type="match status" value="6"/>
</dbReference>
<dbReference type="SUPFAM" id="SSF55961">
    <property type="entry name" value="Bet v1-like"/>
    <property type="match status" value="2"/>
</dbReference>
<dbReference type="SUPFAM" id="SSF81383">
    <property type="entry name" value="F-box domain"/>
    <property type="match status" value="1"/>
</dbReference>
<dbReference type="SUPFAM" id="SSF50978">
    <property type="entry name" value="WD40 repeat-like"/>
    <property type="match status" value="2"/>
</dbReference>
<dbReference type="PROSITE" id="PS50181">
    <property type="entry name" value="FBOX"/>
    <property type="match status" value="1"/>
</dbReference>
<dbReference type="PROSITE" id="PS50848">
    <property type="entry name" value="START"/>
    <property type="match status" value="1"/>
</dbReference>
<dbReference type="PROSITE" id="PS00678">
    <property type="entry name" value="WD_REPEATS_1"/>
    <property type="match status" value="2"/>
</dbReference>
<dbReference type="PROSITE" id="PS50082">
    <property type="entry name" value="WD_REPEATS_2"/>
    <property type="match status" value="5"/>
</dbReference>
<dbReference type="PROSITE" id="PS50294">
    <property type="entry name" value="WD_REPEATS_REGION"/>
    <property type="match status" value="3"/>
</dbReference>
<evidence type="ECO:0000255" key="1">
    <source>
        <dbReference type="PROSITE-ProRule" id="PRU00080"/>
    </source>
</evidence>
<evidence type="ECO:0000255" key="2">
    <source>
        <dbReference type="PROSITE-ProRule" id="PRU00197"/>
    </source>
</evidence>
<evidence type="ECO:0000256" key="3">
    <source>
        <dbReference type="SAM" id="MobiDB-lite"/>
    </source>
</evidence>
<evidence type="ECO:0000269" key="4">
    <source>
    </source>
</evidence>
<evidence type="ECO:0000269" key="5">
    <source>
    </source>
</evidence>
<evidence type="ECO:0000269" key="6">
    <source>
    </source>
</evidence>
<evidence type="ECO:0000269" key="7">
    <source>
    </source>
</evidence>
<evidence type="ECO:0000269" key="8">
    <source>
    </source>
</evidence>
<evidence type="ECO:0000305" key="9"/>
<name>FBXA_DICDI</name>
<protein>
    <recommendedName>
        <fullName>F-box/WD repeat-containing protein A</fullName>
        <shortName>F-box protein A</shortName>
    </recommendedName>
    <alternativeName>
        <fullName>Protein cheater A</fullName>
    </alternativeName>
</protein>